<name>RS13_CLOPE</name>
<gene>
    <name evidence="1" type="primary">rpsM</name>
    <name type="synonym">rpsK</name>
    <name type="ordered locus">CPE2379</name>
</gene>
<reference key="1">
    <citation type="journal article" date="2002" name="Proc. Natl. Acad. Sci. U.S.A.">
        <title>Complete genome sequence of Clostridium perfringens, an anaerobic flesh-eater.</title>
        <authorList>
            <person name="Shimizu T."/>
            <person name="Ohtani K."/>
            <person name="Hirakawa H."/>
            <person name="Ohshima K."/>
            <person name="Yamashita A."/>
            <person name="Shiba T."/>
            <person name="Ogasawara N."/>
            <person name="Hattori M."/>
            <person name="Kuhara S."/>
            <person name="Hayashi H."/>
        </authorList>
    </citation>
    <scope>NUCLEOTIDE SEQUENCE [LARGE SCALE GENOMIC DNA]</scope>
    <source>
        <strain>13 / Type A</strain>
    </source>
</reference>
<protein>
    <recommendedName>
        <fullName evidence="1">Small ribosomal subunit protein uS13</fullName>
    </recommendedName>
    <alternativeName>
        <fullName evidence="3">30S ribosomal protein S13</fullName>
    </alternativeName>
</protein>
<proteinExistence type="inferred from homology"/>
<sequence>MARIAGIDLPREKRVEIGLTYIYGIGLPTSQKILEVTGVNPDTRVKDLTEEEVNSIRNYIKDLTVEGDLRREVALNIKRLVEIGSYRGIRHRKGLPLRGQKTKTNARTRKGPKKTIANKKK</sequence>
<evidence type="ECO:0000255" key="1">
    <source>
        <dbReference type="HAMAP-Rule" id="MF_01315"/>
    </source>
</evidence>
<evidence type="ECO:0000256" key="2">
    <source>
        <dbReference type="SAM" id="MobiDB-lite"/>
    </source>
</evidence>
<evidence type="ECO:0000305" key="3"/>
<feature type="chain" id="PRO_0000132083" description="Small ribosomal subunit protein uS13">
    <location>
        <begin position="1"/>
        <end position="121"/>
    </location>
</feature>
<feature type="region of interest" description="Disordered" evidence="2">
    <location>
        <begin position="93"/>
        <end position="121"/>
    </location>
</feature>
<dbReference type="EMBL" id="BA000016">
    <property type="protein sequence ID" value="BAB82085.1"/>
    <property type="molecule type" value="Genomic_DNA"/>
</dbReference>
<dbReference type="RefSeq" id="WP_003454489.1">
    <property type="nucleotide sequence ID" value="NC_003366.1"/>
</dbReference>
<dbReference type="SMR" id="Q8XHU8"/>
<dbReference type="STRING" id="195102.gene:10491696"/>
<dbReference type="GeneID" id="93001035"/>
<dbReference type="KEGG" id="cpe:CPE2379"/>
<dbReference type="HOGENOM" id="CLU_103849_1_2_9"/>
<dbReference type="Proteomes" id="UP000000818">
    <property type="component" value="Chromosome"/>
</dbReference>
<dbReference type="GO" id="GO:0005829">
    <property type="term" value="C:cytosol"/>
    <property type="evidence" value="ECO:0007669"/>
    <property type="project" value="TreeGrafter"/>
</dbReference>
<dbReference type="GO" id="GO:0015935">
    <property type="term" value="C:small ribosomal subunit"/>
    <property type="evidence" value="ECO:0007669"/>
    <property type="project" value="TreeGrafter"/>
</dbReference>
<dbReference type="GO" id="GO:0019843">
    <property type="term" value="F:rRNA binding"/>
    <property type="evidence" value="ECO:0007669"/>
    <property type="project" value="UniProtKB-UniRule"/>
</dbReference>
<dbReference type="GO" id="GO:0003735">
    <property type="term" value="F:structural constituent of ribosome"/>
    <property type="evidence" value="ECO:0007669"/>
    <property type="project" value="InterPro"/>
</dbReference>
<dbReference type="GO" id="GO:0000049">
    <property type="term" value="F:tRNA binding"/>
    <property type="evidence" value="ECO:0007669"/>
    <property type="project" value="UniProtKB-UniRule"/>
</dbReference>
<dbReference type="GO" id="GO:0006412">
    <property type="term" value="P:translation"/>
    <property type="evidence" value="ECO:0007669"/>
    <property type="project" value="UniProtKB-UniRule"/>
</dbReference>
<dbReference type="FunFam" id="1.10.8.50:FF:000001">
    <property type="entry name" value="30S ribosomal protein S13"/>
    <property type="match status" value="1"/>
</dbReference>
<dbReference type="FunFam" id="4.10.910.10:FF:000001">
    <property type="entry name" value="30S ribosomal protein S13"/>
    <property type="match status" value="1"/>
</dbReference>
<dbReference type="Gene3D" id="1.10.8.50">
    <property type="match status" value="1"/>
</dbReference>
<dbReference type="Gene3D" id="4.10.910.10">
    <property type="entry name" value="30s ribosomal protein s13, domain 2"/>
    <property type="match status" value="1"/>
</dbReference>
<dbReference type="HAMAP" id="MF_01315">
    <property type="entry name" value="Ribosomal_uS13"/>
    <property type="match status" value="1"/>
</dbReference>
<dbReference type="InterPro" id="IPR027437">
    <property type="entry name" value="Rbsml_uS13_C"/>
</dbReference>
<dbReference type="InterPro" id="IPR001892">
    <property type="entry name" value="Ribosomal_uS13"/>
</dbReference>
<dbReference type="InterPro" id="IPR010979">
    <property type="entry name" value="Ribosomal_uS13-like_H2TH"/>
</dbReference>
<dbReference type="InterPro" id="IPR019980">
    <property type="entry name" value="Ribosomal_uS13_bac-type"/>
</dbReference>
<dbReference type="InterPro" id="IPR018269">
    <property type="entry name" value="Ribosomal_uS13_CS"/>
</dbReference>
<dbReference type="NCBIfam" id="TIGR03631">
    <property type="entry name" value="uS13_bact"/>
    <property type="match status" value="1"/>
</dbReference>
<dbReference type="PANTHER" id="PTHR10871">
    <property type="entry name" value="30S RIBOSOMAL PROTEIN S13/40S RIBOSOMAL PROTEIN S18"/>
    <property type="match status" value="1"/>
</dbReference>
<dbReference type="PANTHER" id="PTHR10871:SF1">
    <property type="entry name" value="SMALL RIBOSOMAL SUBUNIT PROTEIN US13M"/>
    <property type="match status" value="1"/>
</dbReference>
<dbReference type="Pfam" id="PF00416">
    <property type="entry name" value="Ribosomal_S13"/>
    <property type="match status" value="1"/>
</dbReference>
<dbReference type="PIRSF" id="PIRSF002134">
    <property type="entry name" value="Ribosomal_S13"/>
    <property type="match status" value="1"/>
</dbReference>
<dbReference type="SUPFAM" id="SSF46946">
    <property type="entry name" value="S13-like H2TH domain"/>
    <property type="match status" value="1"/>
</dbReference>
<dbReference type="PROSITE" id="PS00646">
    <property type="entry name" value="RIBOSOMAL_S13_1"/>
    <property type="match status" value="1"/>
</dbReference>
<dbReference type="PROSITE" id="PS50159">
    <property type="entry name" value="RIBOSOMAL_S13_2"/>
    <property type="match status" value="1"/>
</dbReference>
<comment type="function">
    <text evidence="1">Located at the top of the head of the 30S subunit, it contacts several helices of the 16S rRNA. In the 70S ribosome it contacts the 23S rRNA (bridge B1a) and protein L5 of the 50S subunit (bridge B1b), connecting the 2 subunits; these bridges are implicated in subunit movement. Contacts the tRNAs in the A and P-sites.</text>
</comment>
<comment type="subunit">
    <text evidence="1">Part of the 30S ribosomal subunit. Forms a loose heterodimer with protein S19. Forms two bridges to the 50S subunit in the 70S ribosome.</text>
</comment>
<comment type="similarity">
    <text evidence="1">Belongs to the universal ribosomal protein uS13 family.</text>
</comment>
<keyword id="KW-1185">Reference proteome</keyword>
<keyword id="KW-0687">Ribonucleoprotein</keyword>
<keyword id="KW-0689">Ribosomal protein</keyword>
<keyword id="KW-0694">RNA-binding</keyword>
<keyword id="KW-0699">rRNA-binding</keyword>
<keyword id="KW-0820">tRNA-binding</keyword>
<accession>Q8XHU8</accession>
<organism>
    <name type="scientific">Clostridium perfringens (strain 13 / Type A)</name>
    <dbReference type="NCBI Taxonomy" id="195102"/>
    <lineage>
        <taxon>Bacteria</taxon>
        <taxon>Bacillati</taxon>
        <taxon>Bacillota</taxon>
        <taxon>Clostridia</taxon>
        <taxon>Eubacteriales</taxon>
        <taxon>Clostridiaceae</taxon>
        <taxon>Clostridium</taxon>
    </lineage>
</organism>